<name>PENM_STREX</name>
<gene>
    <name type="primary">penM</name>
</gene>
<organism>
    <name type="scientific">Streptomyces exfoliatus</name>
    <name type="common">Streptomyces hydrogenans</name>
    <dbReference type="NCBI Taxonomy" id="1905"/>
    <lineage>
        <taxon>Bacteria</taxon>
        <taxon>Bacillati</taxon>
        <taxon>Actinomycetota</taxon>
        <taxon>Actinomycetes</taxon>
        <taxon>Kitasatosporales</taxon>
        <taxon>Streptomycetaceae</taxon>
        <taxon>Streptomyces</taxon>
    </lineage>
</organism>
<keyword id="KW-0349">Heme</keyword>
<keyword id="KW-0408">Iron</keyword>
<keyword id="KW-0479">Metal-binding</keyword>
<keyword id="KW-0503">Monooxygenase</keyword>
<keyword id="KW-0560">Oxidoreductase</keyword>
<protein>
    <recommendedName>
        <fullName>Pentalenolactone synthase</fullName>
        <ecNumber>1.14.19.8</ecNumber>
    </recommendedName>
    <alternativeName>
        <fullName>Pentalenolactone biosynthesis protein M</fullName>
    </alternativeName>
</protein>
<reference key="1">
    <citation type="journal article" date="2011" name="J. Am. Chem. Soc.">
        <title>Genome mining in streptomyces. Discovery of an unprecedented P450-catalyzed oxidative rearrangement that is the final step in the biosynthesis of pentalenolactone.</title>
        <authorList>
            <person name="Zhu D."/>
            <person name="Seo M.J."/>
            <person name="Ikeda H."/>
            <person name="Cane D.E."/>
        </authorList>
    </citation>
    <scope>NUCLEOTIDE SEQUENCE [GENOMIC DNA]</scope>
    <scope>FUNCTION</scope>
    <scope>CATALYTIC ACTIVITY</scope>
    <scope>COFACTOR</scope>
    <scope>PATHWAY</scope>
    <scope>BIOPHYSICOCHEMICAL PROPERTIES</scope>
    <scope>DISRUPTION PHENOTYPE</scope>
    <source>
        <strain>UC5319</strain>
    </source>
</reference>
<comment type="function">
    <text evidence="2">Catalyzes the final step in the biosynthesis of the sesquiterpenoid antibiotic pentalenolactone by mediating the oxidative rearrangement of pentalenolactone F to pentalenolactone.</text>
</comment>
<comment type="catalytic activity">
    <reaction evidence="2">
        <text>pentalenolactone F + 2 reduced [2Fe-2S]-[ferredoxin] + O2 + 2 H(+) = pentalenolactone + 2 oxidized [2Fe-2S]-[ferredoxin] + 2 H2O</text>
        <dbReference type="Rhea" id="RHEA:34575"/>
        <dbReference type="Rhea" id="RHEA-COMP:10000"/>
        <dbReference type="Rhea" id="RHEA-COMP:10001"/>
        <dbReference type="ChEBI" id="CHEBI:15377"/>
        <dbReference type="ChEBI" id="CHEBI:15378"/>
        <dbReference type="ChEBI" id="CHEBI:15379"/>
        <dbReference type="ChEBI" id="CHEBI:33737"/>
        <dbReference type="ChEBI" id="CHEBI:33738"/>
        <dbReference type="ChEBI" id="CHEBI:70789"/>
        <dbReference type="ChEBI" id="CHEBI:70790"/>
        <dbReference type="EC" id="1.14.19.8"/>
    </reaction>
</comment>
<comment type="cofactor">
    <cofactor evidence="2">
        <name>heme</name>
        <dbReference type="ChEBI" id="CHEBI:30413"/>
    </cofactor>
</comment>
<comment type="biophysicochemical properties">
    <kinetics>
        <KM evidence="2">340 uM for pentalenolactone F</KM>
        <text>kcat is 10.5 min(-1) with pentalenolactone F as substrate.</text>
    </kinetics>
</comment>
<comment type="pathway">
    <text evidence="2">Antibiotic biosynthesis; pentalenolactone biosynthesis.</text>
</comment>
<comment type="disruption phenotype">
    <text evidence="2">Accumulation of the precursor pentalenolactone F and lack of production of pentalenolactone.</text>
</comment>
<comment type="similarity">
    <text evidence="3">Belongs to the cytochrome P450 family.</text>
</comment>
<accession>E3VWJ9</accession>
<sequence length="398" mass="44396">MNELPRLPFDNPAILGIAPQMRALQKEGPIVRVRTAGEDAWLITRYDEVKALLSDRRLGLSDPKPERAAKSTARITMMALMAGDDYDREATEHPQMRELLVPRFSTRRMRVMKARIEQHVDELLDQLAASVAPVDLHRALSFPLPTMVVCDLLGVPLADRERIGQWARGTFDQSDSLHSVNTFQQVVDYMMELVQRKRTEPGDDILSELIAEKDGTLSDEYIAHLGCAVLLFGYETTIVRIDMGVLLMLRNPAQRALLAENPALAPAAVEEILRLAVGGKGSNALIPRYAHSDITVGETVIRTGDAVMLAIGAANIDGHAFPHADLFDLSREKPKAHMAFGHGTRHCIGRVLARIELTAVFERLFRRLPNLQLAVPEESLRWQEHRITGGFDEIPVTF</sequence>
<feature type="chain" id="PRO_0000422011" description="Pentalenolactone synthase">
    <location>
        <begin position="1"/>
        <end position="398"/>
    </location>
</feature>
<feature type="binding site" description="axial binding residue" evidence="1">
    <location>
        <position position="347"/>
    </location>
    <ligand>
        <name>heme</name>
        <dbReference type="ChEBI" id="CHEBI:30413"/>
    </ligand>
    <ligandPart>
        <name>Fe</name>
        <dbReference type="ChEBI" id="CHEBI:18248"/>
    </ligandPart>
</feature>
<dbReference type="EC" id="1.14.19.8"/>
<dbReference type="EMBL" id="HQ292066">
    <property type="protein sequence ID" value="ADO85587.1"/>
    <property type="molecule type" value="Genomic_DNA"/>
</dbReference>
<dbReference type="SMR" id="E3VWJ9"/>
<dbReference type="KEGG" id="ag:ADO85587"/>
<dbReference type="BioCyc" id="MetaCyc:MONOMER-16836"/>
<dbReference type="UniPathway" id="UPA00974"/>
<dbReference type="GO" id="GO:0020037">
    <property type="term" value="F:heme binding"/>
    <property type="evidence" value="ECO:0000314"/>
    <property type="project" value="UniProtKB"/>
</dbReference>
<dbReference type="GO" id="GO:0005506">
    <property type="term" value="F:iron ion binding"/>
    <property type="evidence" value="ECO:0000314"/>
    <property type="project" value="UniProtKB"/>
</dbReference>
<dbReference type="GO" id="GO:0004497">
    <property type="term" value="F:monooxygenase activity"/>
    <property type="evidence" value="ECO:0007669"/>
    <property type="project" value="UniProtKB-KW"/>
</dbReference>
<dbReference type="GO" id="GO:0016705">
    <property type="term" value="F:oxidoreductase activity, acting on paired donors, with incorporation or reduction of molecular oxygen"/>
    <property type="evidence" value="ECO:0007669"/>
    <property type="project" value="InterPro"/>
</dbReference>
<dbReference type="GO" id="GO:0016636">
    <property type="term" value="F:oxidoreductase activity, acting on the CH-CH group of donors, iron-sulfur protein as acceptor"/>
    <property type="evidence" value="ECO:0000314"/>
    <property type="project" value="UniProtKB"/>
</dbReference>
<dbReference type="GO" id="GO:1901780">
    <property type="term" value="P:pentalenolactone biosynthetic process"/>
    <property type="evidence" value="ECO:0000314"/>
    <property type="project" value="UniProtKB"/>
</dbReference>
<dbReference type="CDD" id="cd11031">
    <property type="entry name" value="Cyp158A-like"/>
    <property type="match status" value="1"/>
</dbReference>
<dbReference type="FunFam" id="1.10.630.10:FF:000018">
    <property type="entry name" value="Cytochrome P450 monooxygenase"/>
    <property type="match status" value="1"/>
</dbReference>
<dbReference type="Gene3D" id="1.10.630.10">
    <property type="entry name" value="Cytochrome P450"/>
    <property type="match status" value="1"/>
</dbReference>
<dbReference type="InterPro" id="IPR001128">
    <property type="entry name" value="Cyt_P450"/>
</dbReference>
<dbReference type="InterPro" id="IPR002397">
    <property type="entry name" value="Cyt_P450_B"/>
</dbReference>
<dbReference type="InterPro" id="IPR017972">
    <property type="entry name" value="Cyt_P450_CS"/>
</dbReference>
<dbReference type="InterPro" id="IPR036396">
    <property type="entry name" value="Cyt_P450_sf"/>
</dbReference>
<dbReference type="InterPro" id="IPR054976">
    <property type="entry name" value="PentlenlactSyn"/>
</dbReference>
<dbReference type="NCBIfam" id="NF045816">
    <property type="entry name" value="PentlenlactSyn"/>
    <property type="match status" value="1"/>
</dbReference>
<dbReference type="PANTHER" id="PTHR46696:SF5">
    <property type="entry name" value="CYTOCHROME P450 BJ-1"/>
    <property type="match status" value="1"/>
</dbReference>
<dbReference type="PANTHER" id="PTHR46696">
    <property type="entry name" value="P450, PUTATIVE (EUROFUNG)-RELATED"/>
    <property type="match status" value="1"/>
</dbReference>
<dbReference type="Pfam" id="PF00067">
    <property type="entry name" value="p450"/>
    <property type="match status" value="1"/>
</dbReference>
<dbReference type="PRINTS" id="PR00359">
    <property type="entry name" value="BP450"/>
</dbReference>
<dbReference type="PRINTS" id="PR00385">
    <property type="entry name" value="P450"/>
</dbReference>
<dbReference type="SUPFAM" id="SSF48264">
    <property type="entry name" value="Cytochrome P450"/>
    <property type="match status" value="1"/>
</dbReference>
<dbReference type="PROSITE" id="PS00086">
    <property type="entry name" value="CYTOCHROME_P450"/>
    <property type="match status" value="1"/>
</dbReference>
<evidence type="ECO:0000250" key="1"/>
<evidence type="ECO:0000269" key="2">
    <source>
    </source>
</evidence>
<evidence type="ECO:0000305" key="3"/>
<proteinExistence type="evidence at protein level"/>